<reference key="1">
    <citation type="journal article" date="1995" name="EMBO J.">
        <title>Staf, a novel zinc finger protein that activates the RNA polymerase III promoter of the selenocysteine tRNA gene.</title>
        <authorList>
            <person name="Schuster C."/>
            <person name="Myslinski E."/>
            <person name="Krol A."/>
            <person name="Carbon P."/>
        </authorList>
    </citation>
    <scope>NUCLEOTIDE SEQUENCE [MRNA] (ISOFORM 1)</scope>
    <scope>FUNCTION</scope>
    <scope>DNA-BINDING</scope>
    <source>
        <tissue>Ovary</tissue>
    </source>
</reference>
<reference key="2">
    <citation type="submission" date="2004-05" db="EMBL/GenBank/DDBJ databases">
        <authorList>
            <consortium name="NIH - Xenopus Gene Collection (XGC) project"/>
        </authorList>
    </citation>
    <scope>NUCLEOTIDE SEQUENCE [LARGE SCALE MRNA] (ISOFORM 2)</scope>
    <source>
        <tissue>Oocyte</tissue>
    </source>
</reference>
<accession>Q91853</accession>
<accession>Q6IR49</accession>
<organism>
    <name type="scientific">Xenopus laevis</name>
    <name type="common">African clawed frog</name>
    <dbReference type="NCBI Taxonomy" id="8355"/>
    <lineage>
        <taxon>Eukaryota</taxon>
        <taxon>Metazoa</taxon>
        <taxon>Chordata</taxon>
        <taxon>Craniata</taxon>
        <taxon>Vertebrata</taxon>
        <taxon>Euteleostomi</taxon>
        <taxon>Amphibia</taxon>
        <taxon>Batrachia</taxon>
        <taxon>Anura</taxon>
        <taxon>Pipoidea</taxon>
        <taxon>Pipidae</taxon>
        <taxon>Xenopodinae</taxon>
        <taxon>Xenopus</taxon>
        <taxon>Xenopus</taxon>
    </lineage>
</organism>
<proteinExistence type="evidence at protein level"/>
<protein>
    <recommendedName>
        <fullName>Zinc finger protein 143</fullName>
    </recommendedName>
    <alternativeName>
        <fullName>Selenocysteine tRNA gene transcription-activating factor</fullName>
    </alternativeName>
</protein>
<evidence type="ECO:0000255" key="1">
    <source>
        <dbReference type="PROSITE-ProRule" id="PRU00042"/>
    </source>
</evidence>
<evidence type="ECO:0000269" key="2">
    <source>
    </source>
</evidence>
<evidence type="ECO:0000303" key="3">
    <source ref="2"/>
</evidence>
<evidence type="ECO:0000305" key="4"/>
<feature type="chain" id="PRO_0000370719" description="Zinc finger protein 143">
    <location>
        <begin position="1"/>
        <end position="565"/>
    </location>
</feature>
<feature type="zinc finger region" description="C2H2-type 1" evidence="1">
    <location>
        <begin position="230"/>
        <end position="254"/>
    </location>
</feature>
<feature type="zinc finger region" description="C2H2-type 2" evidence="1">
    <location>
        <begin position="260"/>
        <end position="284"/>
    </location>
</feature>
<feature type="zinc finger region" description="C2H2-type 3" evidence="1">
    <location>
        <begin position="290"/>
        <end position="314"/>
    </location>
</feature>
<feature type="zinc finger region" description="C2H2-type 4" evidence="1">
    <location>
        <begin position="320"/>
        <end position="344"/>
    </location>
</feature>
<feature type="zinc finger region" description="C2H2-type 5" evidence="1">
    <location>
        <begin position="350"/>
        <end position="374"/>
    </location>
</feature>
<feature type="zinc finger region" description="C2H2-type 6" evidence="1">
    <location>
        <begin position="380"/>
        <end position="404"/>
    </location>
</feature>
<feature type="zinc finger region" description="C2H2-type 7" evidence="1">
    <location>
        <begin position="410"/>
        <end position="433"/>
    </location>
</feature>
<feature type="splice variant" id="VSP_036981" description="In isoform 2." evidence="3">
    <location>
        <begin position="493"/>
        <end position="538"/>
    </location>
</feature>
<gene>
    <name type="primary">znf143</name>
    <name type="synonym">staf</name>
</gene>
<name>ZN143_XENLA</name>
<sequence>MLLAQINRDSQAMAEFPGGGGEAQHVTLCLTEAVADGESMDTMEGMSLQAVTLADGSTAYIQHNTKDGKLIEGQVIQLEDGSAAYVQHVPKGDDLSLEDGQAVQLEDGTTAYIHHSSKDSYDQSSVQAVQLEDGTTAYIHHAVQVPQSDTILAIQADGTVAGLHTGEASIDPDTISALEQYAAKVSIEGGEGAGSNALINESESEKKMQIVLSHGARLPIKAQQTNEKAFRCDYEGCGKLYTTAHHLKVHERSHTGDRPYQCDHGSCRKAFATGYGLKSHVRTHTGEKPYRCSEENCTKSFKTSGDLQKHVRTHTGERPFKCPFEGCGRSFTTSNIRKVHIRTHTGERPYYCSEPGCGRAFASATNYKNHVRIHTGEKPYVCTVPGCDKRFTEYSSLYKHHVVHTHSKPYNCNHCGKTYKQISTLAMHKRTAHNDTEPIEEDQESFFVPQPPDEVIKGSQITYVTGVDGEDGISATQSGQQLALIAQDGTSHVAIVAQDLSAFHNSETGPQHSHNLGGSDSRPVTLLATSNGRQIAVQIGEQQSLEEAIRIASRIQQGESPGMED</sequence>
<comment type="function">
    <text evidence="2">Transcriptional activator. Activates the gene for selenocysteine tRNA (tRNAsec). Binds to the activator element (AE) motif of the selenocysteine tRNA gene promoter.</text>
</comment>
<comment type="subcellular location">
    <subcellularLocation>
        <location evidence="4">Nucleus</location>
    </subcellularLocation>
</comment>
<comment type="alternative products">
    <event type="alternative splicing"/>
    <isoform>
        <id>Q91853-1</id>
        <name>1</name>
        <sequence type="displayed"/>
    </isoform>
    <isoform>
        <id>Q91853-2</id>
        <name>2</name>
        <sequence type="described" ref="VSP_036981"/>
    </isoform>
</comment>
<comment type="similarity">
    <text evidence="4">Belongs to the GLI C2H2-type zinc-finger protein family.</text>
</comment>
<comment type="sequence caution" evidence="4">
    <conflict type="erroneous initiation">
        <sequence resource="EMBL-CDS" id="AAH71051"/>
    </conflict>
</comment>
<comment type="sequence caution" evidence="4">
    <conflict type="erroneous initiation">
        <sequence resource="EMBL-CDS" id="CAA59354"/>
    </conflict>
</comment>
<keyword id="KW-0010">Activator</keyword>
<keyword id="KW-0025">Alternative splicing</keyword>
<keyword id="KW-0238">DNA-binding</keyword>
<keyword id="KW-0479">Metal-binding</keyword>
<keyword id="KW-0539">Nucleus</keyword>
<keyword id="KW-1185">Reference proteome</keyword>
<keyword id="KW-0677">Repeat</keyword>
<keyword id="KW-0804">Transcription</keyword>
<keyword id="KW-0805">Transcription regulation</keyword>
<keyword id="KW-0862">Zinc</keyword>
<keyword id="KW-0863">Zinc-finger</keyword>
<dbReference type="EMBL" id="X84996">
    <property type="protein sequence ID" value="CAA59354.1"/>
    <property type="status" value="ALT_INIT"/>
    <property type="molecule type" value="mRNA"/>
</dbReference>
<dbReference type="EMBL" id="BC071051">
    <property type="protein sequence ID" value="AAH71051.1"/>
    <property type="status" value="ALT_INIT"/>
    <property type="molecule type" value="mRNA"/>
</dbReference>
<dbReference type="PIR" id="S58681">
    <property type="entry name" value="S58681"/>
</dbReference>
<dbReference type="RefSeq" id="NP_001084373.1">
    <property type="nucleotide sequence ID" value="NM_001090904.1"/>
</dbReference>
<dbReference type="RefSeq" id="XP_018115027.1">
    <molecule id="Q91853-2"/>
    <property type="nucleotide sequence ID" value="XM_018259538.1"/>
</dbReference>
<dbReference type="SMR" id="Q91853"/>
<dbReference type="DNASU" id="399467"/>
<dbReference type="GeneID" id="399467"/>
<dbReference type="KEGG" id="xla:399467"/>
<dbReference type="AGR" id="Xenbase:XB-GENE-1012509"/>
<dbReference type="CTD" id="399467"/>
<dbReference type="Xenbase" id="XB-GENE-1012509">
    <property type="gene designation" value="znf143.S"/>
</dbReference>
<dbReference type="OrthoDB" id="6077919at2759"/>
<dbReference type="Proteomes" id="UP000186698">
    <property type="component" value="Chromosome 4S"/>
</dbReference>
<dbReference type="Bgee" id="399467">
    <property type="expression patterns" value="Expressed in egg cell and 19 other cell types or tissues"/>
</dbReference>
<dbReference type="GO" id="GO:0005634">
    <property type="term" value="C:nucleus"/>
    <property type="evidence" value="ECO:0000318"/>
    <property type="project" value="GO_Central"/>
</dbReference>
<dbReference type="GO" id="GO:0000981">
    <property type="term" value="F:DNA-binding transcription factor activity, RNA polymerase II-specific"/>
    <property type="evidence" value="ECO:0000318"/>
    <property type="project" value="GO_Central"/>
</dbReference>
<dbReference type="GO" id="GO:0000978">
    <property type="term" value="F:RNA polymerase II cis-regulatory region sequence-specific DNA binding"/>
    <property type="evidence" value="ECO:0000318"/>
    <property type="project" value="GO_Central"/>
</dbReference>
<dbReference type="GO" id="GO:0008270">
    <property type="term" value="F:zinc ion binding"/>
    <property type="evidence" value="ECO:0007669"/>
    <property type="project" value="UniProtKB-KW"/>
</dbReference>
<dbReference type="GO" id="GO:0006357">
    <property type="term" value="P:regulation of transcription by RNA polymerase II"/>
    <property type="evidence" value="ECO:0000318"/>
    <property type="project" value="GO_Central"/>
</dbReference>
<dbReference type="FunFam" id="3.30.160.60:FF:000071">
    <property type="entry name" value="Putative zinc finger protein 143"/>
    <property type="match status" value="1"/>
</dbReference>
<dbReference type="FunFam" id="3.30.160.60:FF:000125">
    <property type="entry name" value="Putative zinc finger protein 143"/>
    <property type="match status" value="1"/>
</dbReference>
<dbReference type="FunFam" id="3.30.160.60:FF:000137">
    <property type="entry name" value="Putative zinc finger protein 143"/>
    <property type="match status" value="1"/>
</dbReference>
<dbReference type="FunFam" id="3.30.160.60:FF:000142">
    <property type="entry name" value="Putative zinc finger protein 143"/>
    <property type="match status" value="1"/>
</dbReference>
<dbReference type="FunFam" id="3.30.160.60:FF:000072">
    <property type="entry name" value="zinc finger protein 143 isoform X1"/>
    <property type="match status" value="1"/>
</dbReference>
<dbReference type="FunFam" id="3.30.160.60:FF:000236">
    <property type="entry name" value="zinc finger protein 143 isoform X1"/>
    <property type="match status" value="1"/>
</dbReference>
<dbReference type="FunFam" id="3.30.160.60:FF:000016">
    <property type="entry name" value="zinc finger protein 37 homolog"/>
    <property type="match status" value="1"/>
</dbReference>
<dbReference type="Gene3D" id="3.30.160.60">
    <property type="entry name" value="Classic Zinc Finger"/>
    <property type="match status" value="7"/>
</dbReference>
<dbReference type="InterPro" id="IPR036236">
    <property type="entry name" value="Znf_C2H2_sf"/>
</dbReference>
<dbReference type="InterPro" id="IPR013087">
    <property type="entry name" value="Znf_C2H2_type"/>
</dbReference>
<dbReference type="PANTHER" id="PTHR23235">
    <property type="entry name" value="KRUEPPEL-LIKE TRANSCRIPTION FACTOR"/>
    <property type="match status" value="1"/>
</dbReference>
<dbReference type="Pfam" id="PF00096">
    <property type="entry name" value="zf-C2H2"/>
    <property type="match status" value="6"/>
</dbReference>
<dbReference type="SMART" id="SM00355">
    <property type="entry name" value="ZnF_C2H2"/>
    <property type="match status" value="7"/>
</dbReference>
<dbReference type="SUPFAM" id="SSF57667">
    <property type="entry name" value="beta-beta-alpha zinc fingers"/>
    <property type="match status" value="3"/>
</dbReference>
<dbReference type="PROSITE" id="PS00028">
    <property type="entry name" value="ZINC_FINGER_C2H2_1"/>
    <property type="match status" value="7"/>
</dbReference>
<dbReference type="PROSITE" id="PS50157">
    <property type="entry name" value="ZINC_FINGER_C2H2_2"/>
    <property type="match status" value="7"/>
</dbReference>